<keyword id="KW-0150">Chloroplast</keyword>
<keyword id="KW-0472">Membrane</keyword>
<keyword id="KW-0602">Photosynthesis</keyword>
<keyword id="KW-0604">Photosystem II</keyword>
<keyword id="KW-0934">Plastid</keyword>
<keyword id="KW-0674">Reaction center</keyword>
<keyword id="KW-0793">Thylakoid</keyword>
<keyword id="KW-0812">Transmembrane</keyword>
<keyword id="KW-1133">Transmembrane helix</keyword>
<proteinExistence type="inferred from homology"/>
<sequence>MADTTGRIPLWIIGTVAGILVIGLIGIFFYGSYSGLGSSL</sequence>
<organism>
    <name type="scientific">Aethionema cordifolium</name>
    <name type="common">Lebanon stonecress</name>
    <dbReference type="NCBI Taxonomy" id="434059"/>
    <lineage>
        <taxon>Eukaryota</taxon>
        <taxon>Viridiplantae</taxon>
        <taxon>Streptophyta</taxon>
        <taxon>Embryophyta</taxon>
        <taxon>Tracheophyta</taxon>
        <taxon>Spermatophyta</taxon>
        <taxon>Magnoliopsida</taxon>
        <taxon>eudicotyledons</taxon>
        <taxon>Gunneridae</taxon>
        <taxon>Pentapetalae</taxon>
        <taxon>rosids</taxon>
        <taxon>malvids</taxon>
        <taxon>Brassicales</taxon>
        <taxon>Brassicaceae</taxon>
        <taxon>Aethionemeae</taxon>
        <taxon>Aethionema</taxon>
    </lineage>
</organism>
<geneLocation type="chloroplast"/>
<protein>
    <recommendedName>
        <fullName evidence="1">Photosystem II reaction center protein J</fullName>
        <shortName evidence="1">PSII-J</shortName>
    </recommendedName>
</protein>
<name>PSBJ_AETCO</name>
<reference key="1">
    <citation type="submission" date="2007-03" db="EMBL/GenBank/DDBJ databases">
        <title>Sequencing analysis of Aethionema coridifolium chloroplast DNA.</title>
        <authorList>
            <person name="Hosouchi T."/>
            <person name="Tsuruoka H."/>
            <person name="Kotani H."/>
        </authorList>
    </citation>
    <scope>NUCLEOTIDE SEQUENCE [LARGE SCALE GENOMIC DNA]</scope>
</reference>
<accession>A4QJC9</accession>
<comment type="function">
    <text evidence="1">One of the components of the core complex of photosystem II (PSII). PSII is a light-driven water:plastoquinone oxidoreductase that uses light energy to abstract electrons from H(2)O, generating O(2) and a proton gradient subsequently used for ATP formation. It consists of a core antenna complex that captures photons, and an electron transfer chain that converts photonic excitation into a charge separation.</text>
</comment>
<comment type="subunit">
    <text evidence="1">PSII is composed of 1 copy each of membrane proteins PsbA, PsbB, PsbC, PsbD, PsbE, PsbF, PsbH, PsbI, PsbJ, PsbK, PsbL, PsbM, PsbT, PsbX, PsbY, PsbZ, Psb30/Ycf12, at least 3 peripheral proteins of the oxygen-evolving complex and a large number of cofactors. It forms dimeric complexes.</text>
</comment>
<comment type="subcellular location">
    <subcellularLocation>
        <location evidence="1">Plastid</location>
        <location evidence="1">Chloroplast thylakoid membrane</location>
        <topology evidence="1">Single-pass membrane protein</topology>
    </subcellularLocation>
</comment>
<comment type="similarity">
    <text evidence="1">Belongs to the PsbJ family.</text>
</comment>
<dbReference type="EMBL" id="AP009366">
    <property type="protein sequence ID" value="BAF49784.1"/>
    <property type="molecule type" value="Genomic_DNA"/>
</dbReference>
<dbReference type="RefSeq" id="YP_001122960.1">
    <property type="nucleotide sequence ID" value="NC_009265.1"/>
</dbReference>
<dbReference type="SMR" id="A4QJC9"/>
<dbReference type="GeneID" id="4968644"/>
<dbReference type="GO" id="GO:0009535">
    <property type="term" value="C:chloroplast thylakoid membrane"/>
    <property type="evidence" value="ECO:0007669"/>
    <property type="project" value="UniProtKB-SubCell"/>
</dbReference>
<dbReference type="GO" id="GO:0009539">
    <property type="term" value="C:photosystem II reaction center"/>
    <property type="evidence" value="ECO:0007669"/>
    <property type="project" value="InterPro"/>
</dbReference>
<dbReference type="GO" id="GO:0015979">
    <property type="term" value="P:photosynthesis"/>
    <property type="evidence" value="ECO:0007669"/>
    <property type="project" value="UniProtKB-UniRule"/>
</dbReference>
<dbReference type="Gene3D" id="6.10.250.2070">
    <property type="match status" value="1"/>
</dbReference>
<dbReference type="HAMAP" id="MF_01305">
    <property type="entry name" value="PSII_PsbJ"/>
    <property type="match status" value="1"/>
</dbReference>
<dbReference type="InterPro" id="IPR002682">
    <property type="entry name" value="PSII_PsbJ"/>
</dbReference>
<dbReference type="InterPro" id="IPR037267">
    <property type="entry name" value="PSII_PsbJ_sf"/>
</dbReference>
<dbReference type="NCBIfam" id="NF002722">
    <property type="entry name" value="PRK02565.1"/>
    <property type="match status" value="1"/>
</dbReference>
<dbReference type="PANTHER" id="PTHR34812">
    <property type="entry name" value="PHOTOSYSTEM II REACTION CENTER PROTEIN J"/>
    <property type="match status" value="1"/>
</dbReference>
<dbReference type="PANTHER" id="PTHR34812:SF3">
    <property type="entry name" value="PHOTOSYSTEM II REACTION CENTER PROTEIN J"/>
    <property type="match status" value="1"/>
</dbReference>
<dbReference type="Pfam" id="PF01788">
    <property type="entry name" value="PsbJ"/>
    <property type="match status" value="1"/>
</dbReference>
<dbReference type="SUPFAM" id="SSF161021">
    <property type="entry name" value="Photosystem II reaction center protein J, PsbJ"/>
    <property type="match status" value="1"/>
</dbReference>
<evidence type="ECO:0000255" key="1">
    <source>
        <dbReference type="HAMAP-Rule" id="MF_01305"/>
    </source>
</evidence>
<gene>
    <name evidence="1" type="primary">psbJ</name>
</gene>
<feature type="chain" id="PRO_0000292244" description="Photosystem II reaction center protein J">
    <location>
        <begin position="1"/>
        <end position="40"/>
    </location>
</feature>
<feature type="transmembrane region" description="Helical" evidence="1">
    <location>
        <begin position="8"/>
        <end position="28"/>
    </location>
</feature>